<feature type="chain" id="PRO_1000133246" description="Protein SprT">
    <location>
        <begin position="1"/>
        <end position="165"/>
    </location>
</feature>
<feature type="domain" description="SprT-like" evidence="1">
    <location>
        <begin position="10"/>
        <end position="158"/>
    </location>
</feature>
<feature type="active site" evidence="1">
    <location>
        <position position="70"/>
    </location>
</feature>
<feature type="binding site" evidence="1">
    <location>
        <position position="69"/>
    </location>
    <ligand>
        <name>Zn(2+)</name>
        <dbReference type="ChEBI" id="CHEBI:29105"/>
    </ligand>
</feature>
<feature type="binding site" evidence="1">
    <location>
        <position position="73"/>
    </location>
    <ligand>
        <name>Zn(2+)</name>
        <dbReference type="ChEBI" id="CHEBI:29105"/>
    </ligand>
</feature>
<sequence length="165" mass="19723">MPEHLNARVEACYRQAEHFFQRSFPRPTVSFRLRGQKAGVAHLDENLLRFNPQLYRENREHFLEQTVAHEVAHLIAHQLFGPRIRPHGEEWQLIMRGIYGLPPDRCHTYAVKRRATTRYLYRCHCPEHNDFPFSPQRHTLVAKGRRYYCRRCKATLVFTGEVLRE</sequence>
<keyword id="KW-0963">Cytoplasm</keyword>
<keyword id="KW-0479">Metal-binding</keyword>
<keyword id="KW-0862">Zinc</keyword>
<protein>
    <recommendedName>
        <fullName evidence="1">Protein SprT</fullName>
    </recommendedName>
</protein>
<comment type="cofactor">
    <cofactor evidence="1">
        <name>Zn(2+)</name>
        <dbReference type="ChEBI" id="CHEBI:29105"/>
    </cofactor>
    <text evidence="1">Binds 1 zinc ion.</text>
</comment>
<comment type="subcellular location">
    <subcellularLocation>
        <location evidence="1">Cytoplasm</location>
    </subcellularLocation>
</comment>
<comment type="similarity">
    <text evidence="1">Belongs to the SprT family.</text>
</comment>
<accession>B7UX01</accession>
<reference key="1">
    <citation type="journal article" date="2009" name="Genome Res.">
        <title>Newly introduced genomic prophage islands are critical determinants of in vivo competitiveness in the Liverpool epidemic strain of Pseudomonas aeruginosa.</title>
        <authorList>
            <person name="Winstanley C."/>
            <person name="Langille M.G.I."/>
            <person name="Fothergill J.L."/>
            <person name="Kukavica-Ibrulj I."/>
            <person name="Paradis-Bleau C."/>
            <person name="Sanschagrin F."/>
            <person name="Thomson N.R."/>
            <person name="Winsor G.L."/>
            <person name="Quail M.A."/>
            <person name="Lennard N."/>
            <person name="Bignell A."/>
            <person name="Clarke L."/>
            <person name="Seeger K."/>
            <person name="Saunders D."/>
            <person name="Harris D."/>
            <person name="Parkhill J."/>
            <person name="Hancock R.E.W."/>
            <person name="Brinkman F.S.L."/>
            <person name="Levesque R.C."/>
        </authorList>
    </citation>
    <scope>NUCLEOTIDE SEQUENCE [LARGE SCALE GENOMIC DNA]</scope>
    <source>
        <strain>LESB58</strain>
    </source>
</reference>
<organism>
    <name type="scientific">Pseudomonas aeruginosa (strain LESB58)</name>
    <dbReference type="NCBI Taxonomy" id="557722"/>
    <lineage>
        <taxon>Bacteria</taxon>
        <taxon>Pseudomonadati</taxon>
        <taxon>Pseudomonadota</taxon>
        <taxon>Gammaproteobacteria</taxon>
        <taxon>Pseudomonadales</taxon>
        <taxon>Pseudomonadaceae</taxon>
        <taxon>Pseudomonas</taxon>
    </lineage>
</organism>
<name>SPRT_PSEA8</name>
<proteinExistence type="inferred from homology"/>
<dbReference type="EMBL" id="FM209186">
    <property type="protein sequence ID" value="CAW28887.1"/>
    <property type="molecule type" value="Genomic_DNA"/>
</dbReference>
<dbReference type="RefSeq" id="WP_003082453.1">
    <property type="nucleotide sequence ID" value="NC_011770.1"/>
</dbReference>
<dbReference type="SMR" id="B7UX01"/>
<dbReference type="KEGG" id="pag:PLES_41321"/>
<dbReference type="HOGENOM" id="CLU_113336_0_1_6"/>
<dbReference type="GO" id="GO:0005737">
    <property type="term" value="C:cytoplasm"/>
    <property type="evidence" value="ECO:0007669"/>
    <property type="project" value="UniProtKB-SubCell"/>
</dbReference>
<dbReference type="GO" id="GO:0008270">
    <property type="term" value="F:zinc ion binding"/>
    <property type="evidence" value="ECO:0007669"/>
    <property type="project" value="UniProtKB-UniRule"/>
</dbReference>
<dbReference type="GO" id="GO:0006950">
    <property type="term" value="P:response to stress"/>
    <property type="evidence" value="ECO:0007669"/>
    <property type="project" value="UniProtKB-ARBA"/>
</dbReference>
<dbReference type="HAMAP" id="MF_00746">
    <property type="entry name" value="SprT"/>
    <property type="match status" value="1"/>
</dbReference>
<dbReference type="InterPro" id="IPR006640">
    <property type="entry name" value="SprT-like_domain"/>
</dbReference>
<dbReference type="InterPro" id="IPR035240">
    <property type="entry name" value="SprT_Zn_ribbon"/>
</dbReference>
<dbReference type="InterPro" id="IPR023483">
    <property type="entry name" value="Uncharacterised_SprT"/>
</dbReference>
<dbReference type="NCBIfam" id="NF003421">
    <property type="entry name" value="PRK04860.1"/>
    <property type="match status" value="1"/>
</dbReference>
<dbReference type="PANTHER" id="PTHR38773">
    <property type="entry name" value="PROTEIN SPRT"/>
    <property type="match status" value="1"/>
</dbReference>
<dbReference type="PANTHER" id="PTHR38773:SF1">
    <property type="entry name" value="PROTEIN SPRT"/>
    <property type="match status" value="1"/>
</dbReference>
<dbReference type="Pfam" id="PF10263">
    <property type="entry name" value="SprT-like"/>
    <property type="match status" value="1"/>
</dbReference>
<dbReference type="Pfam" id="PF17283">
    <property type="entry name" value="Zn_ribbon_SprT"/>
    <property type="match status" value="1"/>
</dbReference>
<dbReference type="SMART" id="SM00731">
    <property type="entry name" value="SprT"/>
    <property type="match status" value="1"/>
</dbReference>
<dbReference type="PROSITE" id="PS00142">
    <property type="entry name" value="ZINC_PROTEASE"/>
    <property type="match status" value="1"/>
</dbReference>
<gene>
    <name evidence="1" type="primary">sprT</name>
    <name type="ordered locus">PLES_41321</name>
</gene>
<evidence type="ECO:0000255" key="1">
    <source>
        <dbReference type="HAMAP-Rule" id="MF_00746"/>
    </source>
</evidence>